<dbReference type="EMBL" id="CP001600">
    <property type="protein sequence ID" value="ACR68384.1"/>
    <property type="molecule type" value="Genomic_DNA"/>
</dbReference>
<dbReference type="RefSeq" id="WP_015870558.1">
    <property type="nucleotide sequence ID" value="NZ_CP169062.1"/>
</dbReference>
<dbReference type="SMR" id="C5BHP0"/>
<dbReference type="STRING" id="67780.B6E78_16190"/>
<dbReference type="GeneID" id="69538201"/>
<dbReference type="KEGG" id="eic:NT01EI_1176"/>
<dbReference type="PATRIC" id="fig|634503.3.peg.1065"/>
<dbReference type="HOGENOM" id="CLU_052038_1_1_6"/>
<dbReference type="OrthoDB" id="5290530at2"/>
<dbReference type="Proteomes" id="UP000001485">
    <property type="component" value="Chromosome"/>
</dbReference>
<dbReference type="GO" id="GO:0043590">
    <property type="term" value="C:bacterial nucleoid"/>
    <property type="evidence" value="ECO:0007669"/>
    <property type="project" value="TreeGrafter"/>
</dbReference>
<dbReference type="GO" id="GO:0005737">
    <property type="term" value="C:cytoplasm"/>
    <property type="evidence" value="ECO:0007669"/>
    <property type="project" value="UniProtKB-UniRule"/>
</dbReference>
<dbReference type="GO" id="GO:0003690">
    <property type="term" value="F:double-stranded DNA binding"/>
    <property type="evidence" value="ECO:0007669"/>
    <property type="project" value="TreeGrafter"/>
</dbReference>
<dbReference type="GO" id="GO:0006310">
    <property type="term" value="P:DNA recombination"/>
    <property type="evidence" value="ECO:0007669"/>
    <property type="project" value="UniProtKB-UniRule"/>
</dbReference>
<dbReference type="GO" id="GO:0000018">
    <property type="term" value="P:regulation of DNA recombination"/>
    <property type="evidence" value="ECO:0007669"/>
    <property type="project" value="TreeGrafter"/>
</dbReference>
<dbReference type="HAMAP" id="MF_00194">
    <property type="entry name" value="RdgC"/>
    <property type="match status" value="1"/>
</dbReference>
<dbReference type="InterPro" id="IPR007476">
    <property type="entry name" value="RdgC"/>
</dbReference>
<dbReference type="NCBIfam" id="NF001460">
    <property type="entry name" value="PRK00321.1-1"/>
    <property type="match status" value="1"/>
</dbReference>
<dbReference type="NCBIfam" id="NF001462">
    <property type="entry name" value="PRK00321.1-3"/>
    <property type="match status" value="1"/>
</dbReference>
<dbReference type="NCBIfam" id="NF001464">
    <property type="entry name" value="PRK00321.1-5"/>
    <property type="match status" value="1"/>
</dbReference>
<dbReference type="PANTHER" id="PTHR38103">
    <property type="entry name" value="RECOMBINATION-ASSOCIATED PROTEIN RDGC"/>
    <property type="match status" value="1"/>
</dbReference>
<dbReference type="PANTHER" id="PTHR38103:SF1">
    <property type="entry name" value="RECOMBINATION-ASSOCIATED PROTEIN RDGC"/>
    <property type="match status" value="1"/>
</dbReference>
<dbReference type="Pfam" id="PF04381">
    <property type="entry name" value="RdgC"/>
    <property type="match status" value="1"/>
</dbReference>
<sequence>MLWFKNLLIYRLNREIPLVAQEMESQLSAMAFTPCGSQDMSRTGWVPPLGGGSDALTHCANGQILLCARKEEKILPAPVLKQALQAKIERLEGEQHRKLKKTEKDALKDEVLHSLLPRAFSRFNQTWLWIDSVNNLIMLDAASAKRAEDVLALLRKSLGSLPVVPLTLDKPIEMTLTEWVRSGNTPAGFCLQDEAELKAILEEGGVIRCKQQALVCDEIAVHIEAGKLVTKLALDWHERIQLVLADDGAIKRLKFSETLRDQNEDIDREDAALRFDADFALMTGELAVLIDELITALGGETAQ</sequence>
<protein>
    <recommendedName>
        <fullName evidence="1">Recombination-associated protein RdgC</fullName>
    </recommendedName>
</protein>
<proteinExistence type="inferred from homology"/>
<accession>C5BHP0</accession>
<gene>
    <name evidence="1" type="primary">rdgC</name>
    <name type="ordered locus">NT01EI_1176</name>
</gene>
<reference key="1">
    <citation type="submission" date="2009-03" db="EMBL/GenBank/DDBJ databases">
        <title>Complete genome sequence of Edwardsiella ictaluri 93-146.</title>
        <authorList>
            <person name="Williams M.L."/>
            <person name="Gillaspy A.F."/>
            <person name="Dyer D.W."/>
            <person name="Thune R.L."/>
            <person name="Waldbieser G.C."/>
            <person name="Schuster S.C."/>
            <person name="Gipson J."/>
            <person name="Zaitshik J."/>
            <person name="Landry C."/>
            <person name="Lawrence M.L."/>
        </authorList>
    </citation>
    <scope>NUCLEOTIDE SEQUENCE [LARGE SCALE GENOMIC DNA]</scope>
    <source>
        <strain>93-146</strain>
    </source>
</reference>
<keyword id="KW-0963">Cytoplasm</keyword>
<keyword id="KW-0233">DNA recombination</keyword>
<evidence type="ECO:0000255" key="1">
    <source>
        <dbReference type="HAMAP-Rule" id="MF_00194"/>
    </source>
</evidence>
<name>RDGC_EDWI9</name>
<feature type="chain" id="PRO_1000204025" description="Recombination-associated protein RdgC">
    <location>
        <begin position="1"/>
        <end position="303"/>
    </location>
</feature>
<organism>
    <name type="scientific">Edwardsiella ictaluri (strain 93-146)</name>
    <dbReference type="NCBI Taxonomy" id="634503"/>
    <lineage>
        <taxon>Bacteria</taxon>
        <taxon>Pseudomonadati</taxon>
        <taxon>Pseudomonadota</taxon>
        <taxon>Gammaproteobacteria</taxon>
        <taxon>Enterobacterales</taxon>
        <taxon>Hafniaceae</taxon>
        <taxon>Edwardsiella</taxon>
    </lineage>
</organism>
<comment type="function">
    <text evidence="1">May be involved in recombination.</text>
</comment>
<comment type="subcellular location">
    <subcellularLocation>
        <location evidence="1">Cytoplasm</location>
        <location evidence="1">Nucleoid</location>
    </subcellularLocation>
</comment>
<comment type="similarity">
    <text evidence="1">Belongs to the RdgC family.</text>
</comment>